<feature type="chain" id="PRO_0000370520" description="tRNA (guanine-N(7)-)-methyltransferase non-catalytic subunit TRM82">
    <location>
        <begin position="1"/>
        <end position="446"/>
    </location>
</feature>
<feature type="repeat" description="WD 1">
    <location>
        <begin position="107"/>
        <end position="147"/>
    </location>
</feature>
<feature type="repeat" description="WD 2">
    <location>
        <begin position="202"/>
        <end position="243"/>
    </location>
</feature>
<feature type="repeat" description="WD 3">
    <location>
        <begin position="247"/>
        <end position="287"/>
    </location>
</feature>
<feature type="region of interest" description="Disordered" evidence="2">
    <location>
        <begin position="67"/>
        <end position="97"/>
    </location>
</feature>
<feature type="compositionally biased region" description="Low complexity" evidence="2">
    <location>
        <begin position="87"/>
        <end position="97"/>
    </location>
</feature>
<accession>Q6BP03</accession>
<name>TRM82_DEBHA</name>
<gene>
    <name evidence="1" type="primary">TRM82</name>
    <name type="ordered locus">DEHA2E17644g</name>
</gene>
<comment type="function">
    <text evidence="1">Required for the formation of N(7)-methylguanine at position 46 (m7G46) in tRNA. In the complex, it is required to stabilize and induce conformational changes of the catalytic subunit.</text>
</comment>
<comment type="pathway">
    <text evidence="1">tRNA modification; N(7)-methylguanine-tRNA biosynthesis.</text>
</comment>
<comment type="subunit">
    <text evidence="1">Forms a heterodimer with the catalytic subunit TRM8.</text>
</comment>
<comment type="subcellular location">
    <subcellularLocation>
        <location evidence="1">Nucleus</location>
    </subcellularLocation>
</comment>
<comment type="similarity">
    <text evidence="1">Belongs to the WD repeat TRM82 family.</text>
</comment>
<dbReference type="EMBL" id="CR382137">
    <property type="protein sequence ID" value="CAG88327.1"/>
    <property type="molecule type" value="Genomic_DNA"/>
</dbReference>
<dbReference type="RefSeq" id="XP_460067.1">
    <property type="nucleotide sequence ID" value="XM_460067.1"/>
</dbReference>
<dbReference type="SMR" id="Q6BP03"/>
<dbReference type="FunCoup" id="Q6BP03">
    <property type="interactions" value="290"/>
</dbReference>
<dbReference type="STRING" id="284592.Q6BP03"/>
<dbReference type="GeneID" id="2902036"/>
<dbReference type="KEGG" id="dha:DEHA2E17644g"/>
<dbReference type="VEuPathDB" id="FungiDB:DEHA2E17644g"/>
<dbReference type="eggNOG" id="KOG3914">
    <property type="taxonomic scope" value="Eukaryota"/>
</dbReference>
<dbReference type="HOGENOM" id="CLU_022082_0_0_1"/>
<dbReference type="InParanoid" id="Q6BP03"/>
<dbReference type="OMA" id="VKHWLFG"/>
<dbReference type="OrthoDB" id="339900at2759"/>
<dbReference type="UniPathway" id="UPA00989"/>
<dbReference type="Proteomes" id="UP000000599">
    <property type="component" value="Chromosome E"/>
</dbReference>
<dbReference type="GO" id="GO:0005829">
    <property type="term" value="C:cytosol"/>
    <property type="evidence" value="ECO:0007669"/>
    <property type="project" value="EnsemblFungi"/>
</dbReference>
<dbReference type="GO" id="GO:0005634">
    <property type="term" value="C:nucleus"/>
    <property type="evidence" value="ECO:0007669"/>
    <property type="project" value="UniProtKB-SubCell"/>
</dbReference>
<dbReference type="GO" id="GO:0106143">
    <property type="term" value="C:tRNA (m7G46) methyltransferase complex"/>
    <property type="evidence" value="ECO:0007669"/>
    <property type="project" value="EnsemblFungi"/>
</dbReference>
<dbReference type="GO" id="GO:0008047">
    <property type="term" value="F:enzyme activator activity"/>
    <property type="evidence" value="ECO:0007669"/>
    <property type="project" value="EnsemblFungi"/>
</dbReference>
<dbReference type="GO" id="GO:0106004">
    <property type="term" value="P:tRNA (guanine-N7)-methylation"/>
    <property type="evidence" value="ECO:0007669"/>
    <property type="project" value="UniProtKB-UniRule"/>
</dbReference>
<dbReference type="Gene3D" id="2.130.10.10">
    <property type="entry name" value="YVTN repeat-like/Quinoprotein amine dehydrogenase"/>
    <property type="match status" value="1"/>
</dbReference>
<dbReference type="HAMAP" id="MF_03056">
    <property type="entry name" value="TRM82"/>
    <property type="match status" value="1"/>
</dbReference>
<dbReference type="InterPro" id="IPR028884">
    <property type="entry name" value="Trm82"/>
</dbReference>
<dbReference type="InterPro" id="IPR015943">
    <property type="entry name" value="WD40/YVTN_repeat-like_dom_sf"/>
</dbReference>
<dbReference type="InterPro" id="IPR036322">
    <property type="entry name" value="WD40_repeat_dom_sf"/>
</dbReference>
<dbReference type="InterPro" id="IPR001680">
    <property type="entry name" value="WD40_rpt"/>
</dbReference>
<dbReference type="PANTHER" id="PTHR16288:SF0">
    <property type="entry name" value="TRNA (GUANINE-N(7)-)-METHYLTRANSFERASE NON-CATALYTIC SUBUNIT WDR4"/>
    <property type="match status" value="1"/>
</dbReference>
<dbReference type="PANTHER" id="PTHR16288">
    <property type="entry name" value="WD40 REPEAT PROTEIN 4"/>
    <property type="match status" value="1"/>
</dbReference>
<dbReference type="Pfam" id="PF00400">
    <property type="entry name" value="WD40"/>
    <property type="match status" value="1"/>
</dbReference>
<dbReference type="SMART" id="SM00320">
    <property type="entry name" value="WD40"/>
    <property type="match status" value="2"/>
</dbReference>
<dbReference type="SUPFAM" id="SSF50978">
    <property type="entry name" value="WD40 repeat-like"/>
    <property type="match status" value="1"/>
</dbReference>
<dbReference type="PROSITE" id="PS50294">
    <property type="entry name" value="WD_REPEATS_REGION"/>
    <property type="match status" value="1"/>
</dbReference>
<proteinExistence type="inferred from homology"/>
<sequence>MKHPFQIITTDKSGKHLFATVKNNLQVFDLESGSLLGVWIDEVNSNTSLKKQQEEKIKVLQAQQEELTQTSEDTEQENTAPYKKQKSSVSKPIKVPKIPVPGPGAPPIYNYIRALTLSKDEKFLIGITDSDKSVIIFSIDFENTENCLTLIKRQVFPKRPCAVSTSIDDRTVVVADKFGDVYTIEIDSEAAIDEKELSPLLGHVSMLSDVKIAEHNGKQFILTGDRDEHIKVSNYPKSYIVKHWLFGHREFVSSLHIPDFNTDLLISGGGDEFVCLWNWYKNELLSKVPLRDLIQPFLTDSHLPPERFLTEDSKREISISKILTYVNPKSSEKLLIVLCENTNCVLLFELKDDFSIIHKCTLKVNYSLVDICLDQSSGTFIASKDIESGDDLLEFYQINNDSNNLEIVDRSNLSKAISTANNCEVESRDQFYPLYYINSLRKRSEH</sequence>
<reference key="1">
    <citation type="journal article" date="2004" name="Nature">
        <title>Genome evolution in yeasts.</title>
        <authorList>
            <person name="Dujon B."/>
            <person name="Sherman D."/>
            <person name="Fischer G."/>
            <person name="Durrens P."/>
            <person name="Casaregola S."/>
            <person name="Lafontaine I."/>
            <person name="de Montigny J."/>
            <person name="Marck C."/>
            <person name="Neuveglise C."/>
            <person name="Talla E."/>
            <person name="Goffard N."/>
            <person name="Frangeul L."/>
            <person name="Aigle M."/>
            <person name="Anthouard V."/>
            <person name="Babour A."/>
            <person name="Barbe V."/>
            <person name="Barnay S."/>
            <person name="Blanchin S."/>
            <person name="Beckerich J.-M."/>
            <person name="Beyne E."/>
            <person name="Bleykasten C."/>
            <person name="Boisrame A."/>
            <person name="Boyer J."/>
            <person name="Cattolico L."/>
            <person name="Confanioleri F."/>
            <person name="de Daruvar A."/>
            <person name="Despons L."/>
            <person name="Fabre E."/>
            <person name="Fairhead C."/>
            <person name="Ferry-Dumazet H."/>
            <person name="Groppi A."/>
            <person name="Hantraye F."/>
            <person name="Hennequin C."/>
            <person name="Jauniaux N."/>
            <person name="Joyet P."/>
            <person name="Kachouri R."/>
            <person name="Kerrest A."/>
            <person name="Koszul R."/>
            <person name="Lemaire M."/>
            <person name="Lesur I."/>
            <person name="Ma L."/>
            <person name="Muller H."/>
            <person name="Nicaud J.-M."/>
            <person name="Nikolski M."/>
            <person name="Oztas S."/>
            <person name="Ozier-Kalogeropoulos O."/>
            <person name="Pellenz S."/>
            <person name="Potier S."/>
            <person name="Richard G.-F."/>
            <person name="Straub M.-L."/>
            <person name="Suleau A."/>
            <person name="Swennen D."/>
            <person name="Tekaia F."/>
            <person name="Wesolowski-Louvel M."/>
            <person name="Westhof E."/>
            <person name="Wirth B."/>
            <person name="Zeniou-Meyer M."/>
            <person name="Zivanovic Y."/>
            <person name="Bolotin-Fukuhara M."/>
            <person name="Thierry A."/>
            <person name="Bouchier C."/>
            <person name="Caudron B."/>
            <person name="Scarpelli C."/>
            <person name="Gaillardin C."/>
            <person name="Weissenbach J."/>
            <person name="Wincker P."/>
            <person name="Souciet J.-L."/>
        </authorList>
    </citation>
    <scope>NUCLEOTIDE SEQUENCE [LARGE SCALE GENOMIC DNA]</scope>
    <source>
        <strain>ATCC 36239 / CBS 767 / BCRC 21394 / JCM 1990 / NBRC 0083 / IGC 2968</strain>
    </source>
</reference>
<protein>
    <recommendedName>
        <fullName evidence="1">tRNA (guanine-N(7)-)-methyltransferase non-catalytic subunit TRM82</fullName>
    </recommendedName>
    <alternativeName>
        <fullName evidence="1">Transfer RNA methyltransferase 82</fullName>
    </alternativeName>
</protein>
<evidence type="ECO:0000255" key="1">
    <source>
        <dbReference type="HAMAP-Rule" id="MF_03056"/>
    </source>
</evidence>
<evidence type="ECO:0000256" key="2">
    <source>
        <dbReference type="SAM" id="MobiDB-lite"/>
    </source>
</evidence>
<keyword id="KW-0539">Nucleus</keyword>
<keyword id="KW-1185">Reference proteome</keyword>
<keyword id="KW-0677">Repeat</keyword>
<keyword id="KW-0819">tRNA processing</keyword>
<keyword id="KW-0853">WD repeat</keyword>
<organism>
    <name type="scientific">Debaryomyces hansenii (strain ATCC 36239 / CBS 767 / BCRC 21394 / JCM 1990 / NBRC 0083 / IGC 2968)</name>
    <name type="common">Yeast</name>
    <name type="synonym">Torulaspora hansenii</name>
    <dbReference type="NCBI Taxonomy" id="284592"/>
    <lineage>
        <taxon>Eukaryota</taxon>
        <taxon>Fungi</taxon>
        <taxon>Dikarya</taxon>
        <taxon>Ascomycota</taxon>
        <taxon>Saccharomycotina</taxon>
        <taxon>Pichiomycetes</taxon>
        <taxon>Debaryomycetaceae</taxon>
        <taxon>Debaryomyces</taxon>
    </lineage>
</organism>